<reference key="1">
    <citation type="journal article" date="1997" name="J. Bacteriol.">
        <title>The kdp system of Clostridium acetobutylicum: cloning, sequencing, and transcriptional regulation in response to potassium concentration.</title>
        <authorList>
            <person name="Treuner-Lange A."/>
            <person name="Kuhn A."/>
            <person name="Duerre P."/>
        </authorList>
    </citation>
    <scope>NUCLEOTIDE SEQUENCE [GENOMIC DNA]</scope>
    <scope>FUNCTION</scope>
    <scope>SUBCELLULAR LOCATION</scope>
    <source>
        <strain>ATCC 824 / DSM 792 / JCM 1419 / IAM 19013 / LMG 5710 / NBRC 13948 / NRRL B-527 / VKM B-1787 / 2291 / W</strain>
    </source>
</reference>
<reference key="2">
    <citation type="journal article" date="2001" name="J. Bacteriol.">
        <title>Genome sequence and comparative analysis of the solvent-producing bacterium Clostridium acetobutylicum.</title>
        <authorList>
            <person name="Noelling J."/>
            <person name="Breton G."/>
            <person name="Omelchenko M.V."/>
            <person name="Makarova K.S."/>
            <person name="Zeng Q."/>
            <person name="Gibson R."/>
            <person name="Lee H.M."/>
            <person name="Dubois J."/>
            <person name="Qiu D."/>
            <person name="Hitti J."/>
            <person name="Wolf Y.I."/>
            <person name="Tatusov R.L."/>
            <person name="Sabathe F."/>
            <person name="Doucette-Stamm L.A."/>
            <person name="Soucaille P."/>
            <person name="Daly M.J."/>
            <person name="Bennett G.N."/>
            <person name="Koonin E.V."/>
            <person name="Smith D.R."/>
        </authorList>
    </citation>
    <scope>NUCLEOTIDE SEQUENCE [LARGE SCALE GENOMIC DNA]</scope>
    <source>
        <strain>ATCC 824 / DSM 792 / JCM 1419 / IAM 19013 / LMG 5710 / NBRC 13948 / NRRL B-527 / VKM B-1787 / 2291 / W</strain>
    </source>
</reference>
<evidence type="ECO:0000255" key="1">
    <source>
        <dbReference type="HAMAP-Rule" id="MF_00285"/>
    </source>
</evidence>
<evidence type="ECO:0000269" key="2">
    <source>
    </source>
</evidence>
<evidence type="ECO:0000305" key="3"/>
<proteinExistence type="inferred from homology"/>
<dbReference type="EC" id="7.2.2.6" evidence="1"/>
<dbReference type="EMBL" id="U44892">
    <property type="protein sequence ID" value="AAC45478.1"/>
    <property type="molecule type" value="Genomic_DNA"/>
</dbReference>
<dbReference type="EMBL" id="AE001437">
    <property type="protein sequence ID" value="AAK81602.1"/>
    <property type="molecule type" value="Genomic_DNA"/>
</dbReference>
<dbReference type="PIR" id="G97351">
    <property type="entry name" value="G97351"/>
</dbReference>
<dbReference type="PIR" id="T46843">
    <property type="entry name" value="T46843"/>
</dbReference>
<dbReference type="RefSeq" id="NP_350262.1">
    <property type="nucleotide sequence ID" value="NC_003030.1"/>
</dbReference>
<dbReference type="RefSeq" id="WP_010966942.1">
    <property type="nucleotide sequence ID" value="NC_003030.1"/>
</dbReference>
<dbReference type="SMR" id="O32328"/>
<dbReference type="STRING" id="272562.CA_C3681"/>
<dbReference type="GeneID" id="45000179"/>
<dbReference type="KEGG" id="cac:CA_C3681"/>
<dbReference type="PATRIC" id="fig|272562.8.peg.3870"/>
<dbReference type="eggNOG" id="COG2216">
    <property type="taxonomic scope" value="Bacteria"/>
</dbReference>
<dbReference type="HOGENOM" id="CLU_025728_2_0_9"/>
<dbReference type="OrthoDB" id="9813266at2"/>
<dbReference type="Proteomes" id="UP000000814">
    <property type="component" value="Chromosome"/>
</dbReference>
<dbReference type="GO" id="GO:0005886">
    <property type="term" value="C:plasma membrane"/>
    <property type="evidence" value="ECO:0007669"/>
    <property type="project" value="UniProtKB-SubCell"/>
</dbReference>
<dbReference type="GO" id="GO:0005524">
    <property type="term" value="F:ATP binding"/>
    <property type="evidence" value="ECO:0007669"/>
    <property type="project" value="UniProtKB-UniRule"/>
</dbReference>
<dbReference type="GO" id="GO:0016887">
    <property type="term" value="F:ATP hydrolysis activity"/>
    <property type="evidence" value="ECO:0007669"/>
    <property type="project" value="InterPro"/>
</dbReference>
<dbReference type="GO" id="GO:0000287">
    <property type="term" value="F:magnesium ion binding"/>
    <property type="evidence" value="ECO:0007669"/>
    <property type="project" value="UniProtKB-UniRule"/>
</dbReference>
<dbReference type="GO" id="GO:0008556">
    <property type="term" value="F:P-type potassium transmembrane transporter activity"/>
    <property type="evidence" value="ECO:0007669"/>
    <property type="project" value="UniProtKB-UniRule"/>
</dbReference>
<dbReference type="CDD" id="cd02078">
    <property type="entry name" value="P-type_ATPase_K"/>
    <property type="match status" value="1"/>
</dbReference>
<dbReference type="FunFam" id="2.70.150.10:FF:000033">
    <property type="entry name" value="Potassium-transporting ATPase ATP-binding subunit"/>
    <property type="match status" value="1"/>
</dbReference>
<dbReference type="Gene3D" id="3.40.1110.10">
    <property type="entry name" value="Calcium-transporting ATPase, cytoplasmic domain N"/>
    <property type="match status" value="1"/>
</dbReference>
<dbReference type="Gene3D" id="2.70.150.10">
    <property type="entry name" value="Calcium-transporting ATPase, cytoplasmic transduction domain A"/>
    <property type="match status" value="1"/>
</dbReference>
<dbReference type="Gene3D" id="3.40.50.1000">
    <property type="entry name" value="HAD superfamily/HAD-like"/>
    <property type="match status" value="1"/>
</dbReference>
<dbReference type="HAMAP" id="MF_00285">
    <property type="entry name" value="KdpB"/>
    <property type="match status" value="1"/>
</dbReference>
<dbReference type="InterPro" id="IPR023299">
    <property type="entry name" value="ATPase_P-typ_cyto_dom_N"/>
</dbReference>
<dbReference type="InterPro" id="IPR018303">
    <property type="entry name" value="ATPase_P-typ_P_site"/>
</dbReference>
<dbReference type="InterPro" id="IPR023298">
    <property type="entry name" value="ATPase_P-typ_TM_dom_sf"/>
</dbReference>
<dbReference type="InterPro" id="IPR008250">
    <property type="entry name" value="ATPase_P-typ_transduc_dom_A_sf"/>
</dbReference>
<dbReference type="InterPro" id="IPR036412">
    <property type="entry name" value="HAD-like_sf"/>
</dbReference>
<dbReference type="InterPro" id="IPR023214">
    <property type="entry name" value="HAD_sf"/>
</dbReference>
<dbReference type="InterPro" id="IPR006391">
    <property type="entry name" value="P-type_ATPase_bsu_IA"/>
</dbReference>
<dbReference type="InterPro" id="IPR001757">
    <property type="entry name" value="P_typ_ATPase"/>
</dbReference>
<dbReference type="InterPro" id="IPR044492">
    <property type="entry name" value="P_typ_ATPase_HD_dom"/>
</dbReference>
<dbReference type="NCBIfam" id="TIGR01494">
    <property type="entry name" value="ATPase_P-type"/>
    <property type="match status" value="2"/>
</dbReference>
<dbReference type="NCBIfam" id="TIGR01497">
    <property type="entry name" value="kdpB"/>
    <property type="match status" value="1"/>
</dbReference>
<dbReference type="PANTHER" id="PTHR43743">
    <property type="entry name" value="POTASSIUM-TRANSPORTING ATPASE ATP-BINDING SUBUNIT"/>
    <property type="match status" value="1"/>
</dbReference>
<dbReference type="PANTHER" id="PTHR43743:SF1">
    <property type="entry name" value="POTASSIUM-TRANSPORTING ATPASE ATP-BINDING SUBUNIT"/>
    <property type="match status" value="1"/>
</dbReference>
<dbReference type="Pfam" id="PF00122">
    <property type="entry name" value="E1-E2_ATPase"/>
    <property type="match status" value="1"/>
</dbReference>
<dbReference type="Pfam" id="PF00702">
    <property type="entry name" value="Hydrolase"/>
    <property type="match status" value="1"/>
</dbReference>
<dbReference type="PRINTS" id="PR00119">
    <property type="entry name" value="CATATPASE"/>
</dbReference>
<dbReference type="SFLD" id="SFLDS00003">
    <property type="entry name" value="Haloacid_Dehalogenase"/>
    <property type="match status" value="1"/>
</dbReference>
<dbReference type="SFLD" id="SFLDF00027">
    <property type="entry name" value="p-type_atpase"/>
    <property type="match status" value="1"/>
</dbReference>
<dbReference type="SUPFAM" id="SSF81653">
    <property type="entry name" value="Calcium ATPase, transduction domain A"/>
    <property type="match status" value="1"/>
</dbReference>
<dbReference type="SUPFAM" id="SSF81665">
    <property type="entry name" value="Calcium ATPase, transmembrane domain M"/>
    <property type="match status" value="1"/>
</dbReference>
<dbReference type="SUPFAM" id="SSF56784">
    <property type="entry name" value="HAD-like"/>
    <property type="match status" value="1"/>
</dbReference>
<dbReference type="PROSITE" id="PS00154">
    <property type="entry name" value="ATPASE_E1_E2"/>
    <property type="match status" value="1"/>
</dbReference>
<name>KDPB_CLOAB</name>
<comment type="function">
    <text evidence="1 2">Part of the high-affinity ATP-driven potassium transport (or Kdp) system, which catalyzes the hydrolysis of ATP coupled with the electrogenic transport of potassium into the cytoplasm. This subunit is responsible for energy coupling to the transport system and for the release of the potassium ions to the cytoplasm.</text>
</comment>
<comment type="catalytic activity">
    <reaction evidence="1">
        <text>K(+)(out) + ATP + H2O = K(+)(in) + ADP + phosphate + H(+)</text>
        <dbReference type="Rhea" id="RHEA:16777"/>
        <dbReference type="ChEBI" id="CHEBI:15377"/>
        <dbReference type="ChEBI" id="CHEBI:15378"/>
        <dbReference type="ChEBI" id="CHEBI:29103"/>
        <dbReference type="ChEBI" id="CHEBI:30616"/>
        <dbReference type="ChEBI" id="CHEBI:43474"/>
        <dbReference type="ChEBI" id="CHEBI:456216"/>
        <dbReference type="EC" id="7.2.2.6"/>
    </reaction>
    <physiologicalReaction direction="left-to-right" evidence="1">
        <dbReference type="Rhea" id="RHEA:16778"/>
    </physiologicalReaction>
</comment>
<comment type="subunit">
    <text evidence="1">The system is composed of three essential subunits: KdpA, KdpB and KdpC.</text>
</comment>
<comment type="subcellular location">
    <subcellularLocation>
        <location evidence="1 2">Cell membrane</location>
        <topology evidence="1 2">Multi-pass membrane protein</topology>
    </subcellularLocation>
</comment>
<comment type="similarity">
    <text evidence="1">Belongs to the cation transport ATPase (P-type) (TC 3.A.3) family. Type IA subfamily.</text>
</comment>
<gene>
    <name evidence="1" type="primary">kdpB</name>
    <name type="ordered locus">CA_C3681</name>
</gene>
<feature type="chain" id="PRO_0000046113" description="Potassium-transporting ATPase ATP-binding subunit">
    <location>
        <begin position="1"/>
        <end position="685"/>
    </location>
</feature>
<feature type="transmembrane region" description="Helical" evidence="1">
    <location>
        <begin position="36"/>
        <end position="56"/>
    </location>
</feature>
<feature type="transmembrane region" description="Helical" evidence="1">
    <location>
        <begin position="68"/>
        <end position="88"/>
    </location>
</feature>
<feature type="transmembrane region" description="Helical" evidence="1">
    <location>
        <begin position="218"/>
        <end position="238"/>
    </location>
</feature>
<feature type="transmembrane region" description="Helical" evidence="1">
    <location>
        <begin position="255"/>
        <end position="275"/>
    </location>
</feature>
<feature type="transmembrane region" description="Helical" evidence="1">
    <location>
        <begin position="587"/>
        <end position="607"/>
    </location>
</feature>
<feature type="transmembrane region" description="Helical" evidence="1">
    <location>
        <begin position="615"/>
        <end position="635"/>
    </location>
</feature>
<feature type="transmembrane region" description="Helical" evidence="1">
    <location>
        <begin position="654"/>
        <end position="674"/>
    </location>
</feature>
<feature type="active site" description="4-aspartylphosphate intermediate" evidence="1">
    <location>
        <position position="306"/>
    </location>
</feature>
<feature type="binding site" evidence="1">
    <location>
        <position position="343"/>
    </location>
    <ligand>
        <name>ATP</name>
        <dbReference type="ChEBI" id="CHEBI:30616"/>
    </ligand>
</feature>
<feature type="binding site" evidence="1">
    <location>
        <position position="347"/>
    </location>
    <ligand>
        <name>ATP</name>
        <dbReference type="ChEBI" id="CHEBI:30616"/>
    </ligand>
</feature>
<feature type="binding site" evidence="1">
    <location>
        <begin position="375"/>
        <end position="382"/>
    </location>
    <ligand>
        <name>ATP</name>
        <dbReference type="ChEBI" id="CHEBI:30616"/>
    </ligand>
</feature>
<feature type="binding site" evidence="1">
    <location>
        <position position="394"/>
    </location>
    <ligand>
        <name>ATP</name>
        <dbReference type="ChEBI" id="CHEBI:30616"/>
    </ligand>
</feature>
<feature type="binding site" evidence="1">
    <location>
        <position position="517"/>
    </location>
    <ligand>
        <name>Mg(2+)</name>
        <dbReference type="ChEBI" id="CHEBI:18420"/>
    </ligand>
</feature>
<feature type="binding site" evidence="1">
    <location>
        <position position="521"/>
    </location>
    <ligand>
        <name>Mg(2+)</name>
        <dbReference type="ChEBI" id="CHEBI:18420"/>
    </ligand>
</feature>
<feature type="sequence conflict" description="In Ref. 1; AAC45478." evidence="3" ref="1">
    <original>LN</original>
    <variation>IK</variation>
    <location>
        <begin position="25"/>
        <end position="26"/>
    </location>
</feature>
<feature type="sequence conflict" description="In Ref. 1; AAC45478." evidence="3" ref="1">
    <original>A</original>
    <variation>R</variation>
    <location>
        <position position="256"/>
    </location>
</feature>
<feature type="sequence conflict" description="In Ref. 1; AAC45478." evidence="3" ref="1">
    <original>G</original>
    <variation>A</variation>
    <location>
        <position position="268"/>
    </location>
</feature>
<accession>O32328</accession>
<keyword id="KW-0067">ATP-binding</keyword>
<keyword id="KW-1003">Cell membrane</keyword>
<keyword id="KW-0406">Ion transport</keyword>
<keyword id="KW-0460">Magnesium</keyword>
<keyword id="KW-0472">Membrane</keyword>
<keyword id="KW-0479">Metal-binding</keyword>
<keyword id="KW-0547">Nucleotide-binding</keyword>
<keyword id="KW-0597">Phosphoprotein</keyword>
<keyword id="KW-0630">Potassium</keyword>
<keyword id="KW-0633">Potassium transport</keyword>
<keyword id="KW-1185">Reference proteome</keyword>
<keyword id="KW-1278">Translocase</keyword>
<keyword id="KW-0812">Transmembrane</keyword>
<keyword id="KW-1133">Transmembrane helix</keyword>
<keyword id="KW-0813">Transport</keyword>
<protein>
    <recommendedName>
        <fullName evidence="1">Potassium-transporting ATPase ATP-binding subunit</fullName>
        <ecNumber evidence="1">7.2.2.6</ecNumber>
    </recommendedName>
    <alternativeName>
        <fullName evidence="1">ATP phosphohydrolase [potassium-transporting] B chain</fullName>
    </alternativeName>
    <alternativeName>
        <fullName evidence="1">Potassium-binding and translocating subunit B</fullName>
    </alternativeName>
    <alternativeName>
        <fullName evidence="1">Potassium-translocating ATPase B chain</fullName>
    </alternativeName>
</protein>
<organism>
    <name type="scientific">Clostridium acetobutylicum (strain ATCC 824 / DSM 792 / JCM 1419 / IAM 19013 / LMG 5710 / NBRC 13948 / NRRL B-527 / VKM B-1787 / 2291 / W)</name>
    <dbReference type="NCBI Taxonomy" id="272562"/>
    <lineage>
        <taxon>Bacteria</taxon>
        <taxon>Bacillati</taxon>
        <taxon>Bacillota</taxon>
        <taxon>Clostridia</taxon>
        <taxon>Eubacteriales</taxon>
        <taxon>Clostridiaceae</taxon>
        <taxon>Clostridium</taxon>
    </lineage>
</organism>
<sequence>MKSKKSKFITKDILKEAIIESFKKLNPKYMMKNPVMFVVEVGFFVTILLTIFPSIFGDKGHNLRVYNLIVTIILFITVLFANFAESVAEGRGKAQADALKKTRKDTIAKLIGKDGSIKTINANELKKGDVVLVENGDVIPNDGEVVDGVASVDESAITGESAPVMKEPGGDFASVTGGTKVVSDWLKVEITATPGESFLDKMINLVEGASRQKTPNEIALNTILVSLTLIFLIVLVALYPMATYTGVKIPMSTLIALLVCLIPTTIGGLLSAIGIAGMDRVTRFNVIAMSGKAVEACGDVDTMILDKTGTITYGNRLAADFITVGGADKQKLIDYSVMCSLKDDTPEGKSIVELGKQLGITIDTKKYESIEFEEFTAQTRMSGIKLENGTAVKKGAYDAIKKRVQELKGVIPKDLDEAVNKVAKLGGTPLVVCVDNKIYGVIYLKDTVKPGLVERFERLREIGIKTIMCTGDNPLTAATIAKEAGVDGFIAECKPEDKIEAIKKEQDEGKLVAMTGDGTNDAPALAQADVGLAMNSGTTAAKEAANMVDLDSDPTKVLEVVEIGKQLLITRGALTTFSIANDVAKYFAIIPAIFTIAIPKMQLMNIMHLSTPYSAILSALIFNAIIIPALIPIAMKGVKYRPMKSEALLLRNMIVFGFGGIIVPFVGIKIIDMIITPMVRILNLG</sequence>